<name>UVSE_HALH5</name>
<dbReference type="EC" id="3.-.-.-" evidence="2"/>
<dbReference type="EMBL" id="BA000004">
    <property type="protein sequence ID" value="BAB06316.1"/>
    <property type="molecule type" value="Genomic_DNA"/>
</dbReference>
<dbReference type="PIR" id="E83974">
    <property type="entry name" value="E83974"/>
</dbReference>
<dbReference type="RefSeq" id="WP_010898748.1">
    <property type="nucleotide sequence ID" value="NC_002570.2"/>
</dbReference>
<dbReference type="SMR" id="Q9K9P8"/>
<dbReference type="STRING" id="272558.gene:10728495"/>
<dbReference type="KEGG" id="bha:BH2597"/>
<dbReference type="eggNOG" id="COG4294">
    <property type="taxonomic scope" value="Bacteria"/>
</dbReference>
<dbReference type="HOGENOM" id="CLU_017168_0_1_9"/>
<dbReference type="OrthoDB" id="9782576at2"/>
<dbReference type="Proteomes" id="UP000001258">
    <property type="component" value="Chromosome"/>
</dbReference>
<dbReference type="GO" id="GO:0004519">
    <property type="term" value="F:endonuclease activity"/>
    <property type="evidence" value="ECO:0007669"/>
    <property type="project" value="UniProtKB-UniRule"/>
</dbReference>
<dbReference type="GO" id="GO:0006289">
    <property type="term" value="P:nucleotide-excision repair"/>
    <property type="evidence" value="ECO:0007669"/>
    <property type="project" value="InterPro"/>
</dbReference>
<dbReference type="GO" id="GO:0006290">
    <property type="term" value="P:pyrimidine dimer repair"/>
    <property type="evidence" value="ECO:0007669"/>
    <property type="project" value="UniProtKB-UniRule"/>
</dbReference>
<dbReference type="GO" id="GO:0009411">
    <property type="term" value="P:response to UV"/>
    <property type="evidence" value="ECO:0007669"/>
    <property type="project" value="InterPro"/>
</dbReference>
<dbReference type="Gene3D" id="3.20.20.150">
    <property type="entry name" value="Divalent-metal-dependent TIM barrel enzymes"/>
    <property type="match status" value="1"/>
</dbReference>
<dbReference type="HAMAP" id="MF_00606">
    <property type="entry name" value="UV_endonuclease"/>
    <property type="match status" value="1"/>
</dbReference>
<dbReference type="InterPro" id="IPR004601">
    <property type="entry name" value="UvdE"/>
</dbReference>
<dbReference type="InterPro" id="IPR023520">
    <property type="entry name" value="UvdE_bac"/>
</dbReference>
<dbReference type="InterPro" id="IPR036237">
    <property type="entry name" value="Xyl_isomerase-like_sf"/>
</dbReference>
<dbReference type="NCBIfam" id="TIGR00629">
    <property type="entry name" value="uvde"/>
    <property type="match status" value="1"/>
</dbReference>
<dbReference type="PANTHER" id="PTHR31290">
    <property type="entry name" value="UV-DAMAGE ENDONUCLEASE"/>
    <property type="match status" value="1"/>
</dbReference>
<dbReference type="PANTHER" id="PTHR31290:SF5">
    <property type="entry name" value="UV-DAMAGE ENDONUCLEASE"/>
    <property type="match status" value="1"/>
</dbReference>
<dbReference type="Pfam" id="PF03851">
    <property type="entry name" value="UvdE"/>
    <property type="match status" value="1"/>
</dbReference>
<dbReference type="SUPFAM" id="SSF51658">
    <property type="entry name" value="Xylose isomerase-like"/>
    <property type="match status" value="1"/>
</dbReference>
<protein>
    <recommendedName>
        <fullName evidence="2">UV DNA damage endonuclease</fullName>
        <shortName evidence="2">UV-endonuclease</shortName>
        <shortName evidence="2">UVED</shortName>
        <ecNumber evidence="2">3.-.-.-</ecNumber>
    </recommendedName>
</protein>
<comment type="function">
    <text evidence="1">Component in a DNA repair pathway. Removal of UV LIGHT damaged nucleotides. Recognizes pyrimidine dimers and cleave a phosphodiester bond immediately 5' to the lesion (By similarity).</text>
</comment>
<comment type="similarity">
    <text evidence="2">Belongs to the uve1/UvsE family.</text>
</comment>
<feature type="chain" id="PRO_0000215033" description="UV DNA damage endonuclease">
    <location>
        <begin position="1"/>
        <end position="322"/>
    </location>
</feature>
<proteinExistence type="inferred from homology"/>
<sequence>MRIQFGYVAMSMELANASPSKTMTATQFEKIEDHEAGLRKLERIAKTNLHNCLRLLKHNLAYQISFFRLSSKLVPLVNHPLTEGWKYELAIAEELQAVGEFASEHQMRIDFHPDHFVVLNSEAKEITRRSLQTLLYHYKLLKGMEIDPRHRCVLHVGGKKKGVEAGLEQFIENTASIPKSLLSMIMLENDDKSYTIDDVLYLGEKLAIPVVLDIHHHDVLHRSKSLQETWQRIVATWEDSPLPVKIHLSSPLSGEDDPRHHDYINADRFIAFLHEIGADAVDHLHVMIEAKKKDLALFQLMKDLAEYDEITVVSKSAVEFNP</sequence>
<accession>Q9K9P8</accession>
<organism>
    <name type="scientific">Halalkalibacterium halodurans (strain ATCC BAA-125 / DSM 18197 / FERM 7344 / JCM 9153 / C-125)</name>
    <name type="common">Bacillus halodurans</name>
    <dbReference type="NCBI Taxonomy" id="272558"/>
    <lineage>
        <taxon>Bacteria</taxon>
        <taxon>Bacillati</taxon>
        <taxon>Bacillota</taxon>
        <taxon>Bacilli</taxon>
        <taxon>Bacillales</taxon>
        <taxon>Bacillaceae</taxon>
        <taxon>Halalkalibacterium (ex Joshi et al. 2022)</taxon>
    </lineage>
</organism>
<gene>
    <name evidence="2" type="primary">uvsE</name>
    <name type="ordered locus">BH2597</name>
</gene>
<keyword id="KW-0227">DNA damage</keyword>
<keyword id="KW-0228">DNA excision</keyword>
<keyword id="KW-0234">DNA repair</keyword>
<keyword id="KW-0255">Endonuclease</keyword>
<keyword id="KW-0378">Hydrolase</keyword>
<keyword id="KW-0540">Nuclease</keyword>
<keyword id="KW-1185">Reference proteome</keyword>
<evidence type="ECO:0000250" key="1"/>
<evidence type="ECO:0000255" key="2">
    <source>
        <dbReference type="HAMAP-Rule" id="MF_00606"/>
    </source>
</evidence>
<reference key="1">
    <citation type="journal article" date="2000" name="Nucleic Acids Res.">
        <title>Complete genome sequence of the alkaliphilic bacterium Bacillus halodurans and genomic sequence comparison with Bacillus subtilis.</title>
        <authorList>
            <person name="Takami H."/>
            <person name="Nakasone K."/>
            <person name="Takaki Y."/>
            <person name="Maeno G."/>
            <person name="Sasaki R."/>
            <person name="Masui N."/>
            <person name="Fuji F."/>
            <person name="Hirama C."/>
            <person name="Nakamura Y."/>
            <person name="Ogasawara N."/>
            <person name="Kuhara S."/>
            <person name="Horikoshi K."/>
        </authorList>
    </citation>
    <scope>NUCLEOTIDE SEQUENCE [LARGE SCALE GENOMIC DNA]</scope>
    <source>
        <strain>ATCC BAA-125 / DSM 18197 / FERM 7344 / JCM 9153 / C-125</strain>
    </source>
</reference>